<evidence type="ECO:0000255" key="1">
    <source>
        <dbReference type="HAMAP-Rule" id="MF_00038"/>
    </source>
</evidence>
<organism>
    <name type="scientific">Streptococcus pneumoniae serotype 19F (strain G54)</name>
    <dbReference type="NCBI Taxonomy" id="512566"/>
    <lineage>
        <taxon>Bacteria</taxon>
        <taxon>Bacillati</taxon>
        <taxon>Bacillota</taxon>
        <taxon>Bacilli</taxon>
        <taxon>Lactobacillales</taxon>
        <taxon>Streptococcaceae</taxon>
        <taxon>Streptococcus</taxon>
    </lineage>
</organism>
<feature type="chain" id="PRO_1000090676" description="Phospho-N-acetylmuramoyl-pentapeptide-transferase">
    <location>
        <begin position="1"/>
        <end position="326"/>
    </location>
</feature>
<feature type="transmembrane region" description="Helical" evidence="1">
    <location>
        <begin position="3"/>
        <end position="23"/>
    </location>
</feature>
<feature type="transmembrane region" description="Helical" evidence="1">
    <location>
        <begin position="51"/>
        <end position="71"/>
    </location>
</feature>
<feature type="transmembrane region" description="Helical" evidence="1">
    <location>
        <begin position="79"/>
        <end position="99"/>
    </location>
</feature>
<feature type="transmembrane region" description="Helical" evidence="1">
    <location>
        <begin position="115"/>
        <end position="135"/>
    </location>
</feature>
<feature type="transmembrane region" description="Helical" evidence="1">
    <location>
        <begin position="138"/>
        <end position="158"/>
    </location>
</feature>
<feature type="transmembrane region" description="Helical" evidence="1">
    <location>
        <begin position="169"/>
        <end position="189"/>
    </location>
</feature>
<feature type="transmembrane region" description="Helical" evidence="1">
    <location>
        <begin position="195"/>
        <end position="215"/>
    </location>
</feature>
<feature type="transmembrane region" description="Helical" evidence="1">
    <location>
        <begin position="221"/>
        <end position="243"/>
    </location>
</feature>
<feature type="transmembrane region" description="Helical" evidence="1">
    <location>
        <begin position="306"/>
        <end position="326"/>
    </location>
</feature>
<keyword id="KW-0131">Cell cycle</keyword>
<keyword id="KW-0132">Cell division</keyword>
<keyword id="KW-1003">Cell membrane</keyword>
<keyword id="KW-0133">Cell shape</keyword>
<keyword id="KW-0961">Cell wall biogenesis/degradation</keyword>
<keyword id="KW-0460">Magnesium</keyword>
<keyword id="KW-0472">Membrane</keyword>
<keyword id="KW-0479">Metal-binding</keyword>
<keyword id="KW-0573">Peptidoglycan synthesis</keyword>
<keyword id="KW-0808">Transferase</keyword>
<keyword id="KW-0812">Transmembrane</keyword>
<keyword id="KW-1133">Transmembrane helix</keyword>
<sequence>MFISISAGIVTFLLTLVGIPAFIQFYRKAQITGQQMHEDVKQHQAKAGTPTMGGLVFLIASVLVAFFFALFSNQLSNNVGMILFILVLYGLIGFLDDFLKVFRKINEGLNPKQKLALQLLGGVIFYLFYERGGDILSVFGYPVHLGFFYIFFALFWLVGFSNAVNLTDGVDGLASISVVISLSAYGVIAYVQGQMDILLVILAMIGGLLGFFIFNHKPAKVFMGDVGSLALGGMLAAISMALHQEWTLLIIGIVYVFETTSVMMQVSYFKLTGGKRIFRMTPVHHHFELGGLSGKGNPWSEWKVDFFFWGVGLLASLLTLAILYLM</sequence>
<comment type="function">
    <text evidence="1">Catalyzes the initial step of the lipid cycle reactions in the biosynthesis of the cell wall peptidoglycan: transfers peptidoglycan precursor phospho-MurNAc-pentapeptide from UDP-MurNAc-pentapeptide onto the lipid carrier undecaprenyl phosphate, yielding undecaprenyl-pyrophosphoryl-MurNAc-pentapeptide, known as lipid I.</text>
</comment>
<comment type="catalytic activity">
    <reaction evidence="1">
        <text>UDP-N-acetyl-alpha-D-muramoyl-L-alanyl-gamma-D-glutamyl-L-lysyl-D-alanyl-D-alanine + di-trans,octa-cis-undecaprenyl phosphate = Mur2Ac(oyl-L-Ala-gamma-D-Glu-L-Lys-D-Ala-D-Ala)-di-trans,octa-cis-undecaprenyl diphosphate + UMP</text>
        <dbReference type="Rhea" id="RHEA:21920"/>
        <dbReference type="ChEBI" id="CHEBI:57865"/>
        <dbReference type="ChEBI" id="CHEBI:60032"/>
        <dbReference type="ChEBI" id="CHEBI:60392"/>
        <dbReference type="ChEBI" id="CHEBI:70758"/>
        <dbReference type="EC" id="2.7.8.13"/>
    </reaction>
</comment>
<comment type="cofactor">
    <cofactor evidence="1">
        <name>Mg(2+)</name>
        <dbReference type="ChEBI" id="CHEBI:18420"/>
    </cofactor>
</comment>
<comment type="pathway">
    <text evidence="1">Cell wall biogenesis; peptidoglycan biosynthesis.</text>
</comment>
<comment type="subcellular location">
    <subcellularLocation>
        <location evidence="1">Cell membrane</location>
        <topology evidence="1">Multi-pass membrane protein</topology>
    </subcellularLocation>
</comment>
<comment type="similarity">
    <text evidence="1">Belongs to the glycosyltransferase 4 family. MraY subfamily.</text>
</comment>
<proteinExistence type="inferred from homology"/>
<protein>
    <recommendedName>
        <fullName evidence="1">Phospho-N-acetylmuramoyl-pentapeptide-transferase</fullName>
        <ecNumber evidence="1">2.7.8.13</ecNumber>
    </recommendedName>
    <alternativeName>
        <fullName evidence="1">UDP-MurNAc-pentapeptide phosphotransferase</fullName>
    </alternativeName>
</protein>
<reference key="1">
    <citation type="journal article" date="1998" name="Microbiology">
        <title>Unconventional organization of the division and cell wall gene cluster of Streptococcus pneumoniae.</title>
        <authorList>
            <person name="Massidda O."/>
            <person name="Anderluzzi D."/>
            <person name="Friedli L."/>
            <person name="Feger G."/>
        </authorList>
    </citation>
    <scope>NUCLEOTIDE SEQUENCE [GENOMIC DNA]</scope>
</reference>
<reference key="2">
    <citation type="journal article" date="2001" name="Microb. Drug Resist.">
        <title>Annotated draft genomic sequence from a Streptococcus pneumoniae type 19F clinical isolate.</title>
        <authorList>
            <person name="Dopazo J."/>
            <person name="Mendoza A."/>
            <person name="Herrero J."/>
            <person name="Caldara F."/>
            <person name="Humbert Y."/>
            <person name="Friedli L."/>
            <person name="Guerrier M."/>
            <person name="Grand-Schenk E."/>
            <person name="Gandin C."/>
            <person name="de Francesco M."/>
            <person name="Polissi A."/>
            <person name="Buell G."/>
            <person name="Feger G."/>
            <person name="Garcia E."/>
            <person name="Peitsch M."/>
            <person name="Garcia-Bustos J.F."/>
        </authorList>
    </citation>
    <scope>NUCLEOTIDE SEQUENCE [LARGE SCALE GENOMIC DNA]</scope>
    <source>
        <strain>G54</strain>
    </source>
</reference>
<reference key="3">
    <citation type="submission" date="2008-03" db="EMBL/GenBank/DDBJ databases">
        <title>Pneumococcal beta glucoside metabolism investigated by whole genome comparison.</title>
        <authorList>
            <person name="Mulas L."/>
            <person name="Trappetti C."/>
            <person name="Hakenbeck R."/>
            <person name="Iannelli F."/>
            <person name="Pozzi G."/>
            <person name="Davidsen T.M."/>
            <person name="Tettelin H."/>
            <person name="Oggioni M."/>
        </authorList>
    </citation>
    <scope>NUCLEOTIDE SEQUENCE [LARGE SCALE GENOMIC DNA]</scope>
    <source>
        <strain>G54</strain>
    </source>
</reference>
<gene>
    <name evidence="1" type="primary">mraY</name>
    <name type="ordered locus">SPG_0306</name>
</gene>
<name>MRAY_STRP4</name>
<dbReference type="EC" id="2.7.8.13" evidence="1"/>
<dbReference type="EMBL" id="AF068903">
    <property type="protein sequence ID" value="AAC95457.1"/>
    <property type="molecule type" value="Genomic_DNA"/>
</dbReference>
<dbReference type="EMBL" id="CP001015">
    <property type="protein sequence ID" value="ACF56547.1"/>
    <property type="molecule type" value="Genomic_DNA"/>
</dbReference>
<dbReference type="SMR" id="B5E6Z5"/>
<dbReference type="KEGG" id="spx:SPG_0306"/>
<dbReference type="HOGENOM" id="CLU_023982_0_1_9"/>
<dbReference type="UniPathway" id="UPA00219"/>
<dbReference type="GO" id="GO:0005886">
    <property type="term" value="C:plasma membrane"/>
    <property type="evidence" value="ECO:0007669"/>
    <property type="project" value="UniProtKB-SubCell"/>
</dbReference>
<dbReference type="GO" id="GO:0046872">
    <property type="term" value="F:metal ion binding"/>
    <property type="evidence" value="ECO:0007669"/>
    <property type="project" value="UniProtKB-KW"/>
</dbReference>
<dbReference type="GO" id="GO:0008963">
    <property type="term" value="F:phospho-N-acetylmuramoyl-pentapeptide-transferase activity"/>
    <property type="evidence" value="ECO:0007669"/>
    <property type="project" value="UniProtKB-UniRule"/>
</dbReference>
<dbReference type="GO" id="GO:0051301">
    <property type="term" value="P:cell division"/>
    <property type="evidence" value="ECO:0007669"/>
    <property type="project" value="UniProtKB-KW"/>
</dbReference>
<dbReference type="GO" id="GO:0071555">
    <property type="term" value="P:cell wall organization"/>
    <property type="evidence" value="ECO:0007669"/>
    <property type="project" value="UniProtKB-KW"/>
</dbReference>
<dbReference type="GO" id="GO:0009252">
    <property type="term" value="P:peptidoglycan biosynthetic process"/>
    <property type="evidence" value="ECO:0007669"/>
    <property type="project" value="UniProtKB-UniRule"/>
</dbReference>
<dbReference type="GO" id="GO:0008360">
    <property type="term" value="P:regulation of cell shape"/>
    <property type="evidence" value="ECO:0007669"/>
    <property type="project" value="UniProtKB-KW"/>
</dbReference>
<dbReference type="CDD" id="cd06852">
    <property type="entry name" value="GT_MraY"/>
    <property type="match status" value="1"/>
</dbReference>
<dbReference type="HAMAP" id="MF_00038">
    <property type="entry name" value="MraY"/>
    <property type="match status" value="1"/>
</dbReference>
<dbReference type="InterPro" id="IPR000715">
    <property type="entry name" value="Glycosyl_transferase_4"/>
</dbReference>
<dbReference type="InterPro" id="IPR003524">
    <property type="entry name" value="PNAcMuramoyl-5peptid_Trfase"/>
</dbReference>
<dbReference type="InterPro" id="IPR018480">
    <property type="entry name" value="PNAcMuramoyl-5peptid_Trfase_CS"/>
</dbReference>
<dbReference type="NCBIfam" id="TIGR00445">
    <property type="entry name" value="mraY"/>
    <property type="match status" value="1"/>
</dbReference>
<dbReference type="PANTHER" id="PTHR22926">
    <property type="entry name" value="PHOSPHO-N-ACETYLMURAMOYL-PENTAPEPTIDE-TRANSFERASE"/>
    <property type="match status" value="1"/>
</dbReference>
<dbReference type="PANTHER" id="PTHR22926:SF5">
    <property type="entry name" value="PHOSPHO-N-ACETYLMURAMOYL-PENTAPEPTIDE-TRANSFERASE HOMOLOG"/>
    <property type="match status" value="1"/>
</dbReference>
<dbReference type="Pfam" id="PF00953">
    <property type="entry name" value="Glycos_transf_4"/>
    <property type="match status" value="1"/>
</dbReference>
<dbReference type="Pfam" id="PF10555">
    <property type="entry name" value="MraY_sig1"/>
    <property type="match status" value="1"/>
</dbReference>
<dbReference type="PROSITE" id="PS01347">
    <property type="entry name" value="MRAY_1"/>
    <property type="match status" value="1"/>
</dbReference>
<dbReference type="PROSITE" id="PS01348">
    <property type="entry name" value="MRAY_2"/>
    <property type="match status" value="1"/>
</dbReference>
<accession>B5E6Z5</accession>
<accession>Q9ZHA5</accession>